<name>NIFH_PELPB</name>
<keyword id="KW-0004">4Fe-4S</keyword>
<keyword id="KW-0013">ADP-ribosylation</keyword>
<keyword id="KW-0067">ATP-binding</keyword>
<keyword id="KW-0408">Iron</keyword>
<keyword id="KW-0411">Iron-sulfur</keyword>
<keyword id="KW-0479">Metal-binding</keyword>
<keyword id="KW-0535">Nitrogen fixation</keyword>
<keyword id="KW-0547">Nucleotide-binding</keyword>
<keyword id="KW-0560">Oxidoreductase</keyword>
<keyword id="KW-1185">Reference proteome</keyword>
<evidence type="ECO:0000255" key="1">
    <source>
        <dbReference type="HAMAP-Rule" id="MF_00533"/>
    </source>
</evidence>
<comment type="function">
    <text evidence="1">The key enzymatic reactions in nitrogen fixation are catalyzed by the nitrogenase complex, which has 2 components: the iron protein and the molybdenum-iron protein.</text>
</comment>
<comment type="catalytic activity">
    <reaction evidence="1">
        <text>N2 + 8 reduced [2Fe-2S]-[ferredoxin] + 16 ATP + 16 H2O = H2 + 8 oxidized [2Fe-2S]-[ferredoxin] + 2 NH4(+) + 16 ADP + 16 phosphate + 6 H(+)</text>
        <dbReference type="Rhea" id="RHEA:21448"/>
        <dbReference type="Rhea" id="RHEA-COMP:10000"/>
        <dbReference type="Rhea" id="RHEA-COMP:10001"/>
        <dbReference type="ChEBI" id="CHEBI:15377"/>
        <dbReference type="ChEBI" id="CHEBI:15378"/>
        <dbReference type="ChEBI" id="CHEBI:17997"/>
        <dbReference type="ChEBI" id="CHEBI:18276"/>
        <dbReference type="ChEBI" id="CHEBI:28938"/>
        <dbReference type="ChEBI" id="CHEBI:30616"/>
        <dbReference type="ChEBI" id="CHEBI:33737"/>
        <dbReference type="ChEBI" id="CHEBI:33738"/>
        <dbReference type="ChEBI" id="CHEBI:43474"/>
        <dbReference type="ChEBI" id="CHEBI:456216"/>
        <dbReference type="EC" id="1.18.6.1"/>
    </reaction>
</comment>
<comment type="cofactor">
    <cofactor evidence="1">
        <name>[4Fe-4S] cluster</name>
        <dbReference type="ChEBI" id="CHEBI:49883"/>
    </cofactor>
    <text evidence="1">Binds 1 [4Fe-4S] cluster per dimer.</text>
</comment>
<comment type="subunit">
    <text evidence="1">Homodimer.</text>
</comment>
<comment type="PTM">
    <text evidence="1">The reversible ADP-ribosylation of Arg-97 inactivates the nitrogenase reductase and regulates nitrogenase activity.</text>
</comment>
<comment type="similarity">
    <text evidence="1">Belongs to the NifH/BchL/ChlL family.</text>
</comment>
<protein>
    <recommendedName>
        <fullName evidence="1">Nitrogenase iron protein</fullName>
        <ecNumber evidence="1">1.18.6.1</ecNumber>
    </recommendedName>
    <alternativeName>
        <fullName evidence="1">Nitrogenase Fe protein</fullName>
    </alternativeName>
    <alternativeName>
        <fullName evidence="1">Nitrogenase component II</fullName>
    </alternativeName>
    <alternativeName>
        <fullName evidence="1">Nitrogenase reductase</fullName>
    </alternativeName>
</protein>
<gene>
    <name evidence="1" type="primary">nifH</name>
    <name type="ordered locus">Ppha_1949</name>
</gene>
<accession>B4SC59</accession>
<feature type="chain" id="PRO_1000211879" description="Nitrogenase iron protein">
    <location>
        <begin position="1"/>
        <end position="274"/>
    </location>
</feature>
<feature type="binding site" evidence="1">
    <location>
        <begin position="8"/>
        <end position="15"/>
    </location>
    <ligand>
        <name>ATP</name>
        <dbReference type="ChEBI" id="CHEBI:30616"/>
    </ligand>
</feature>
<feature type="binding site" evidence="1">
    <location>
        <position position="94"/>
    </location>
    <ligand>
        <name>[4Fe-4S] cluster</name>
        <dbReference type="ChEBI" id="CHEBI:49883"/>
        <note>ligand shared between dimeric partners</note>
    </ligand>
</feature>
<feature type="binding site" evidence="1">
    <location>
        <position position="131"/>
    </location>
    <ligand>
        <name>[4Fe-4S] cluster</name>
        <dbReference type="ChEBI" id="CHEBI:49883"/>
        <note>ligand shared between dimeric partners</note>
    </ligand>
</feature>
<feature type="modified residue" description="ADP-ribosylarginine; by dinitrogenase reductase ADP-ribosyltransferase" evidence="1">
    <location>
        <position position="97"/>
    </location>
</feature>
<reference key="1">
    <citation type="submission" date="2008-06" db="EMBL/GenBank/DDBJ databases">
        <title>Complete sequence of Pelodictyon phaeoclathratiforme BU-1.</title>
        <authorList>
            <consortium name="US DOE Joint Genome Institute"/>
            <person name="Lucas S."/>
            <person name="Copeland A."/>
            <person name="Lapidus A."/>
            <person name="Glavina del Rio T."/>
            <person name="Dalin E."/>
            <person name="Tice H."/>
            <person name="Bruce D."/>
            <person name="Goodwin L."/>
            <person name="Pitluck S."/>
            <person name="Schmutz J."/>
            <person name="Larimer F."/>
            <person name="Land M."/>
            <person name="Hauser L."/>
            <person name="Kyrpides N."/>
            <person name="Mikhailova N."/>
            <person name="Liu Z."/>
            <person name="Li T."/>
            <person name="Zhao F."/>
            <person name="Overmann J."/>
            <person name="Bryant D.A."/>
            <person name="Richardson P."/>
        </authorList>
    </citation>
    <scope>NUCLEOTIDE SEQUENCE [LARGE SCALE GENOMIC DNA]</scope>
    <source>
        <strain>DSM 5477 / BU-1</strain>
    </source>
</reference>
<sequence>MRKVAIYGKGGIGKSTTTQNTVAGLAEMGKKIMVIGCDPKADSTRLLLGGLQQKTVLDTLREEGEEVELEDIIKDGYRNTRCTESGGPEPGVGCAGRGIITSVNLLEQLGAFDDEWDLDYVFYDVLGDVVCGGFAMPIRDGKAEEIYIVCSGEMMAMYAANNICKGILKYADTGGVRLGGLICNSRNVDNERQMIEELAKKIGTQMIHFVPRNNFVQRAEINRKTVIEYDPTHEQADEYRALAQKINDNKMFVIPKPLEIEELEALLIEFGIAN</sequence>
<dbReference type="EC" id="1.18.6.1" evidence="1"/>
<dbReference type="EMBL" id="CP001110">
    <property type="protein sequence ID" value="ACF44165.1"/>
    <property type="molecule type" value="Genomic_DNA"/>
</dbReference>
<dbReference type="RefSeq" id="WP_012508646.1">
    <property type="nucleotide sequence ID" value="NC_011060.1"/>
</dbReference>
<dbReference type="SMR" id="B4SC59"/>
<dbReference type="STRING" id="324925.Ppha_1949"/>
<dbReference type="KEGG" id="pph:Ppha_1949"/>
<dbReference type="eggNOG" id="COG1348">
    <property type="taxonomic scope" value="Bacteria"/>
</dbReference>
<dbReference type="HOGENOM" id="CLU_059373_0_0_10"/>
<dbReference type="OrthoDB" id="9778641at2"/>
<dbReference type="Proteomes" id="UP000002724">
    <property type="component" value="Chromosome"/>
</dbReference>
<dbReference type="GO" id="GO:0051539">
    <property type="term" value="F:4 iron, 4 sulfur cluster binding"/>
    <property type="evidence" value="ECO:0007669"/>
    <property type="project" value="UniProtKB-KW"/>
</dbReference>
<dbReference type="GO" id="GO:0005524">
    <property type="term" value="F:ATP binding"/>
    <property type="evidence" value="ECO:0007669"/>
    <property type="project" value="UniProtKB-UniRule"/>
</dbReference>
<dbReference type="GO" id="GO:0046872">
    <property type="term" value="F:metal ion binding"/>
    <property type="evidence" value="ECO:0007669"/>
    <property type="project" value="UniProtKB-KW"/>
</dbReference>
<dbReference type="GO" id="GO:0016163">
    <property type="term" value="F:nitrogenase activity"/>
    <property type="evidence" value="ECO:0007669"/>
    <property type="project" value="UniProtKB-UniRule"/>
</dbReference>
<dbReference type="GO" id="GO:0009399">
    <property type="term" value="P:nitrogen fixation"/>
    <property type="evidence" value="ECO:0007669"/>
    <property type="project" value="UniProtKB-UniRule"/>
</dbReference>
<dbReference type="CDD" id="cd02040">
    <property type="entry name" value="NifH"/>
    <property type="match status" value="1"/>
</dbReference>
<dbReference type="Gene3D" id="3.40.50.300">
    <property type="entry name" value="P-loop containing nucleotide triphosphate hydrolases"/>
    <property type="match status" value="1"/>
</dbReference>
<dbReference type="HAMAP" id="MF_00533">
    <property type="entry name" value="NifH"/>
    <property type="match status" value="1"/>
</dbReference>
<dbReference type="InterPro" id="IPR030655">
    <property type="entry name" value="NifH/chlL_CS"/>
</dbReference>
<dbReference type="InterPro" id="IPR000392">
    <property type="entry name" value="NifH/frxC"/>
</dbReference>
<dbReference type="InterPro" id="IPR005977">
    <property type="entry name" value="Nitrogenase_Fe_NifH"/>
</dbReference>
<dbReference type="InterPro" id="IPR027417">
    <property type="entry name" value="P-loop_NTPase"/>
</dbReference>
<dbReference type="NCBIfam" id="TIGR01287">
    <property type="entry name" value="nifH"/>
    <property type="match status" value="1"/>
</dbReference>
<dbReference type="PANTHER" id="PTHR42864">
    <property type="entry name" value="LIGHT-INDEPENDENT PROTOCHLOROPHYLLIDE REDUCTASE IRON-SULFUR ATP-BINDING PROTEIN"/>
    <property type="match status" value="1"/>
</dbReference>
<dbReference type="PANTHER" id="PTHR42864:SF2">
    <property type="entry name" value="LIGHT-INDEPENDENT PROTOCHLOROPHYLLIDE REDUCTASE IRON-SULFUR ATP-BINDING PROTEIN"/>
    <property type="match status" value="1"/>
</dbReference>
<dbReference type="Pfam" id="PF00142">
    <property type="entry name" value="Fer4_NifH"/>
    <property type="match status" value="1"/>
</dbReference>
<dbReference type="PIRSF" id="PIRSF000363">
    <property type="entry name" value="Nitrogenase_iron"/>
    <property type="match status" value="1"/>
</dbReference>
<dbReference type="PRINTS" id="PR00091">
    <property type="entry name" value="NITROGNASEII"/>
</dbReference>
<dbReference type="SUPFAM" id="SSF52540">
    <property type="entry name" value="P-loop containing nucleoside triphosphate hydrolases"/>
    <property type="match status" value="1"/>
</dbReference>
<dbReference type="PROSITE" id="PS00746">
    <property type="entry name" value="NIFH_FRXC_1"/>
    <property type="match status" value="1"/>
</dbReference>
<dbReference type="PROSITE" id="PS00692">
    <property type="entry name" value="NIFH_FRXC_2"/>
    <property type="match status" value="1"/>
</dbReference>
<dbReference type="PROSITE" id="PS51026">
    <property type="entry name" value="NIFH_FRXC_3"/>
    <property type="match status" value="1"/>
</dbReference>
<organism>
    <name type="scientific">Pelodictyon phaeoclathratiforme (strain DSM 5477 / BU-1)</name>
    <dbReference type="NCBI Taxonomy" id="324925"/>
    <lineage>
        <taxon>Bacteria</taxon>
        <taxon>Pseudomonadati</taxon>
        <taxon>Chlorobiota</taxon>
        <taxon>Chlorobiia</taxon>
        <taxon>Chlorobiales</taxon>
        <taxon>Chlorobiaceae</taxon>
        <taxon>Chlorobium/Pelodictyon group</taxon>
        <taxon>Pelodictyon</taxon>
    </lineage>
</organism>
<proteinExistence type="inferred from homology"/>